<dbReference type="EC" id="3.2.2.23" evidence="2"/>
<dbReference type="EC" id="4.2.99.18" evidence="2"/>
<dbReference type="EMBL" id="AM167904">
    <property type="protein sequence ID" value="CAJ48138.1"/>
    <property type="molecule type" value="Genomic_DNA"/>
</dbReference>
<dbReference type="RefSeq" id="WP_012416229.1">
    <property type="nucleotide sequence ID" value="NC_010645.1"/>
</dbReference>
<dbReference type="SMR" id="Q2KYB7"/>
<dbReference type="STRING" id="360910.BAV0533"/>
<dbReference type="GeneID" id="92936288"/>
<dbReference type="KEGG" id="bav:BAV0533"/>
<dbReference type="eggNOG" id="COG0266">
    <property type="taxonomic scope" value="Bacteria"/>
</dbReference>
<dbReference type="HOGENOM" id="CLU_038423_1_1_4"/>
<dbReference type="OrthoDB" id="9800855at2"/>
<dbReference type="Proteomes" id="UP000001977">
    <property type="component" value="Chromosome"/>
</dbReference>
<dbReference type="GO" id="GO:0034039">
    <property type="term" value="F:8-oxo-7,8-dihydroguanine DNA N-glycosylase activity"/>
    <property type="evidence" value="ECO:0007669"/>
    <property type="project" value="TreeGrafter"/>
</dbReference>
<dbReference type="GO" id="GO:0140078">
    <property type="term" value="F:class I DNA-(apurinic or apyrimidinic site) endonuclease activity"/>
    <property type="evidence" value="ECO:0007669"/>
    <property type="project" value="UniProtKB-EC"/>
</dbReference>
<dbReference type="GO" id="GO:0003684">
    <property type="term" value="F:damaged DNA binding"/>
    <property type="evidence" value="ECO:0007669"/>
    <property type="project" value="InterPro"/>
</dbReference>
<dbReference type="GO" id="GO:0008270">
    <property type="term" value="F:zinc ion binding"/>
    <property type="evidence" value="ECO:0007669"/>
    <property type="project" value="UniProtKB-UniRule"/>
</dbReference>
<dbReference type="GO" id="GO:0006284">
    <property type="term" value="P:base-excision repair"/>
    <property type="evidence" value="ECO:0007669"/>
    <property type="project" value="InterPro"/>
</dbReference>
<dbReference type="CDD" id="cd08966">
    <property type="entry name" value="EcFpg-like_N"/>
    <property type="match status" value="1"/>
</dbReference>
<dbReference type="FunFam" id="1.10.8.50:FF:000003">
    <property type="entry name" value="Formamidopyrimidine-DNA glycosylase"/>
    <property type="match status" value="1"/>
</dbReference>
<dbReference type="FunFam" id="3.20.190.10:FF:000001">
    <property type="entry name" value="Formamidopyrimidine-DNA glycosylase"/>
    <property type="match status" value="1"/>
</dbReference>
<dbReference type="Gene3D" id="1.10.8.50">
    <property type="match status" value="1"/>
</dbReference>
<dbReference type="Gene3D" id="3.20.190.10">
    <property type="entry name" value="MutM-like, N-terminal"/>
    <property type="match status" value="1"/>
</dbReference>
<dbReference type="HAMAP" id="MF_00103">
    <property type="entry name" value="Fapy_DNA_glycosyl"/>
    <property type="match status" value="1"/>
</dbReference>
<dbReference type="InterPro" id="IPR015886">
    <property type="entry name" value="DNA_glyclase/AP_lyase_DNA-bd"/>
</dbReference>
<dbReference type="InterPro" id="IPR015887">
    <property type="entry name" value="DNA_glyclase_Znf_dom_DNA_BS"/>
</dbReference>
<dbReference type="InterPro" id="IPR020629">
    <property type="entry name" value="Formamido-pyr_DNA_Glyclase"/>
</dbReference>
<dbReference type="InterPro" id="IPR012319">
    <property type="entry name" value="FPG_cat"/>
</dbReference>
<dbReference type="InterPro" id="IPR035937">
    <property type="entry name" value="MutM-like_N-ter"/>
</dbReference>
<dbReference type="InterPro" id="IPR010979">
    <property type="entry name" value="Ribosomal_uS13-like_H2TH"/>
</dbReference>
<dbReference type="InterPro" id="IPR000214">
    <property type="entry name" value="Znf_DNA_glyclase/AP_lyase"/>
</dbReference>
<dbReference type="InterPro" id="IPR010663">
    <property type="entry name" value="Znf_FPG/IleRS"/>
</dbReference>
<dbReference type="NCBIfam" id="TIGR00577">
    <property type="entry name" value="fpg"/>
    <property type="match status" value="1"/>
</dbReference>
<dbReference type="NCBIfam" id="NF002211">
    <property type="entry name" value="PRK01103.1"/>
    <property type="match status" value="1"/>
</dbReference>
<dbReference type="PANTHER" id="PTHR22993">
    <property type="entry name" value="FORMAMIDOPYRIMIDINE-DNA GLYCOSYLASE"/>
    <property type="match status" value="1"/>
</dbReference>
<dbReference type="PANTHER" id="PTHR22993:SF9">
    <property type="entry name" value="FORMAMIDOPYRIMIDINE-DNA GLYCOSYLASE"/>
    <property type="match status" value="1"/>
</dbReference>
<dbReference type="Pfam" id="PF01149">
    <property type="entry name" value="Fapy_DNA_glyco"/>
    <property type="match status" value="1"/>
</dbReference>
<dbReference type="Pfam" id="PF06831">
    <property type="entry name" value="H2TH"/>
    <property type="match status" value="1"/>
</dbReference>
<dbReference type="Pfam" id="PF06827">
    <property type="entry name" value="zf-FPG_IleRS"/>
    <property type="match status" value="1"/>
</dbReference>
<dbReference type="SMART" id="SM00898">
    <property type="entry name" value="Fapy_DNA_glyco"/>
    <property type="match status" value="1"/>
</dbReference>
<dbReference type="SMART" id="SM01232">
    <property type="entry name" value="H2TH"/>
    <property type="match status" value="1"/>
</dbReference>
<dbReference type="SUPFAM" id="SSF57716">
    <property type="entry name" value="Glucocorticoid receptor-like (DNA-binding domain)"/>
    <property type="match status" value="1"/>
</dbReference>
<dbReference type="SUPFAM" id="SSF81624">
    <property type="entry name" value="N-terminal domain of MutM-like DNA repair proteins"/>
    <property type="match status" value="1"/>
</dbReference>
<dbReference type="SUPFAM" id="SSF46946">
    <property type="entry name" value="S13-like H2TH domain"/>
    <property type="match status" value="1"/>
</dbReference>
<dbReference type="PROSITE" id="PS51068">
    <property type="entry name" value="FPG_CAT"/>
    <property type="match status" value="1"/>
</dbReference>
<dbReference type="PROSITE" id="PS01242">
    <property type="entry name" value="ZF_FPG_1"/>
    <property type="match status" value="1"/>
</dbReference>
<dbReference type="PROSITE" id="PS51066">
    <property type="entry name" value="ZF_FPG_2"/>
    <property type="match status" value="1"/>
</dbReference>
<reference key="1">
    <citation type="journal article" date="2006" name="J. Bacteriol.">
        <title>Comparison of the genome sequence of the poultry pathogen Bordetella avium with those of B. bronchiseptica, B. pertussis, and B. parapertussis reveals extensive diversity in surface structures associated with host interaction.</title>
        <authorList>
            <person name="Sebaihia M."/>
            <person name="Preston A."/>
            <person name="Maskell D.J."/>
            <person name="Kuzmiak H."/>
            <person name="Connell T.D."/>
            <person name="King N.D."/>
            <person name="Orndorff P.E."/>
            <person name="Miyamoto D.M."/>
            <person name="Thomson N.R."/>
            <person name="Harris D."/>
            <person name="Goble A."/>
            <person name="Lord A."/>
            <person name="Murphy L."/>
            <person name="Quail M.A."/>
            <person name="Rutter S."/>
            <person name="Squares R."/>
            <person name="Squares S."/>
            <person name="Woodward J."/>
            <person name="Parkhill J."/>
            <person name="Temple L.M."/>
        </authorList>
    </citation>
    <scope>NUCLEOTIDE SEQUENCE [LARGE SCALE GENOMIC DNA]</scope>
    <source>
        <strain>197N</strain>
    </source>
</reference>
<accession>Q2KYB7</accession>
<proteinExistence type="inferred from homology"/>
<gene>
    <name evidence="2" type="primary">mutM</name>
    <name evidence="2" type="synonym">fpg</name>
    <name type="ordered locus">BAV0533</name>
</gene>
<protein>
    <recommendedName>
        <fullName evidence="2">Formamidopyrimidine-DNA glycosylase</fullName>
        <shortName evidence="2">Fapy-DNA glycosylase</shortName>
        <ecNumber evidence="2">3.2.2.23</ecNumber>
    </recommendedName>
    <alternativeName>
        <fullName evidence="2">DNA-(apurinic or apyrimidinic site) lyase MutM</fullName>
        <shortName evidence="2">AP lyase MutM</shortName>
        <ecNumber evidence="2">4.2.99.18</ecNumber>
    </alternativeName>
</protein>
<name>FPG_BORA1</name>
<sequence>MPELPEVETTRRGIDPVITGQTLRRLVVREPRMRWPIPADLPSLLTDRPVLATGRRGKYLLLRFEHGVQIVHLGMSGSLRRVAMDEAPRKHDHVDWVFDHAILRLHDPRRFGAVLWHPNTDGPVEAHPLLIGLGIEPFDPRFDGKWLHDHFRDKRVAVKQALLAGHAVVGVGNIYASECLFRAGIDPRTPAGKLSRPRCERLAQAVRATLADALASGGSTLRDYVGASGEPGAYFAIHAAVYERAGLACRVCGTPIRRLVQGQRATYFCPHCQKR</sequence>
<organism>
    <name type="scientific">Bordetella avium (strain 197N)</name>
    <dbReference type="NCBI Taxonomy" id="360910"/>
    <lineage>
        <taxon>Bacteria</taxon>
        <taxon>Pseudomonadati</taxon>
        <taxon>Pseudomonadota</taxon>
        <taxon>Betaproteobacteria</taxon>
        <taxon>Burkholderiales</taxon>
        <taxon>Alcaligenaceae</taxon>
        <taxon>Bordetella</taxon>
    </lineage>
</organism>
<evidence type="ECO:0000250" key="1"/>
<evidence type="ECO:0000255" key="2">
    <source>
        <dbReference type="HAMAP-Rule" id="MF_00103"/>
    </source>
</evidence>
<keyword id="KW-0227">DNA damage</keyword>
<keyword id="KW-0234">DNA repair</keyword>
<keyword id="KW-0238">DNA-binding</keyword>
<keyword id="KW-0326">Glycosidase</keyword>
<keyword id="KW-0378">Hydrolase</keyword>
<keyword id="KW-0456">Lyase</keyword>
<keyword id="KW-0479">Metal-binding</keyword>
<keyword id="KW-0511">Multifunctional enzyme</keyword>
<keyword id="KW-1185">Reference proteome</keyword>
<keyword id="KW-0862">Zinc</keyword>
<keyword id="KW-0863">Zinc-finger</keyword>
<comment type="function">
    <text evidence="2">Involved in base excision repair of DNA damaged by oxidation or by mutagenic agents. Acts as a DNA glycosylase that recognizes and removes damaged bases. Has a preference for oxidized purines, such as 7,8-dihydro-8-oxoguanine (8-oxoG). Has AP (apurinic/apyrimidinic) lyase activity and introduces nicks in the DNA strand. Cleaves the DNA backbone by beta-delta elimination to generate a single-strand break at the site of the removed base with both 3'- and 5'-phosphates.</text>
</comment>
<comment type="catalytic activity">
    <reaction evidence="2">
        <text>Hydrolysis of DNA containing ring-opened 7-methylguanine residues, releasing 2,6-diamino-4-hydroxy-5-(N-methyl)formamidopyrimidine.</text>
        <dbReference type="EC" id="3.2.2.23"/>
    </reaction>
</comment>
<comment type="catalytic activity">
    <reaction evidence="2">
        <text>2'-deoxyribonucleotide-(2'-deoxyribose 5'-phosphate)-2'-deoxyribonucleotide-DNA = a 3'-end 2'-deoxyribonucleotide-(2,3-dehydro-2,3-deoxyribose 5'-phosphate)-DNA + a 5'-end 5'-phospho-2'-deoxyribonucleoside-DNA + H(+)</text>
        <dbReference type="Rhea" id="RHEA:66592"/>
        <dbReference type="Rhea" id="RHEA-COMP:13180"/>
        <dbReference type="Rhea" id="RHEA-COMP:16897"/>
        <dbReference type="Rhea" id="RHEA-COMP:17067"/>
        <dbReference type="ChEBI" id="CHEBI:15378"/>
        <dbReference type="ChEBI" id="CHEBI:136412"/>
        <dbReference type="ChEBI" id="CHEBI:157695"/>
        <dbReference type="ChEBI" id="CHEBI:167181"/>
        <dbReference type="EC" id="4.2.99.18"/>
    </reaction>
</comment>
<comment type="cofactor">
    <cofactor evidence="2">
        <name>Zn(2+)</name>
        <dbReference type="ChEBI" id="CHEBI:29105"/>
    </cofactor>
    <text evidence="2">Binds 1 zinc ion per subunit.</text>
</comment>
<comment type="subunit">
    <text evidence="2">Monomer.</text>
</comment>
<comment type="similarity">
    <text evidence="2">Belongs to the FPG family.</text>
</comment>
<feature type="initiator methionine" description="Removed" evidence="1">
    <location>
        <position position="1"/>
    </location>
</feature>
<feature type="chain" id="PRO_1000008677" description="Formamidopyrimidine-DNA glycosylase">
    <location>
        <begin position="2"/>
        <end position="275"/>
    </location>
</feature>
<feature type="zinc finger region" description="FPG-type" evidence="2">
    <location>
        <begin position="240"/>
        <end position="274"/>
    </location>
</feature>
<feature type="active site" description="Schiff-base intermediate with DNA" evidence="2">
    <location>
        <position position="2"/>
    </location>
</feature>
<feature type="active site" description="Proton donor" evidence="2">
    <location>
        <position position="3"/>
    </location>
</feature>
<feature type="active site" description="Proton donor; for beta-elimination activity" evidence="2">
    <location>
        <position position="58"/>
    </location>
</feature>
<feature type="active site" description="Proton donor; for delta-elimination activity" evidence="2">
    <location>
        <position position="264"/>
    </location>
</feature>
<feature type="binding site" evidence="2">
    <location>
        <position position="91"/>
    </location>
    <ligand>
        <name>DNA</name>
        <dbReference type="ChEBI" id="CHEBI:16991"/>
    </ligand>
</feature>
<feature type="binding site" evidence="2">
    <location>
        <position position="109"/>
    </location>
    <ligand>
        <name>DNA</name>
        <dbReference type="ChEBI" id="CHEBI:16991"/>
    </ligand>
</feature>
<feature type="binding site" evidence="2">
    <location>
        <position position="154"/>
    </location>
    <ligand>
        <name>DNA</name>
        <dbReference type="ChEBI" id="CHEBI:16991"/>
    </ligand>
</feature>